<name>DEF62_ARATH</name>
<gene>
    <name type="ordered locus">At2g13542</name>
    <name type="ORF">T10F5</name>
</gene>
<accession>Q2V485</accession>
<comment type="subcellular location">
    <subcellularLocation>
        <location evidence="1">Secreted</location>
    </subcellularLocation>
</comment>
<comment type="similarity">
    <text evidence="3">Belongs to the DEFL family.</text>
</comment>
<keyword id="KW-0929">Antimicrobial</keyword>
<keyword id="KW-1015">Disulfide bond</keyword>
<keyword id="KW-0295">Fungicide</keyword>
<keyword id="KW-0611">Plant defense</keyword>
<keyword id="KW-1185">Reference proteome</keyword>
<keyword id="KW-0964">Secreted</keyword>
<keyword id="KW-0732">Signal</keyword>
<sequence>MDVTKTYVTIFVVAILTISVLIQIQQYDRCIGPCLRFYGNHQCYKNCRKAKYDGGQCDFVKKGEKLPECCCYYNKN</sequence>
<dbReference type="EMBL" id="AC007063">
    <property type="status" value="NOT_ANNOTATED_CDS"/>
    <property type="molecule type" value="Genomic_DNA"/>
</dbReference>
<dbReference type="EMBL" id="CP002685">
    <property type="protein sequence ID" value="AEC06239.1"/>
    <property type="molecule type" value="Genomic_DNA"/>
</dbReference>
<dbReference type="RefSeq" id="NP_001031353.1">
    <property type="nucleotide sequence ID" value="NM_001036276.1"/>
</dbReference>
<dbReference type="SMR" id="Q2V485"/>
<dbReference type="STRING" id="3702.Q2V485"/>
<dbReference type="PaxDb" id="3702-AT2G13542.1"/>
<dbReference type="EnsemblPlants" id="AT2G13542.1">
    <property type="protein sequence ID" value="AT2G13542.1"/>
    <property type="gene ID" value="AT2G13542"/>
</dbReference>
<dbReference type="GeneID" id="3768110"/>
<dbReference type="Gramene" id="AT2G13542.1">
    <property type="protein sequence ID" value="AT2G13542.1"/>
    <property type="gene ID" value="AT2G13542"/>
</dbReference>
<dbReference type="KEGG" id="ath:AT2G13542"/>
<dbReference type="Araport" id="AT2G13542"/>
<dbReference type="TAIR" id="AT2G13542"/>
<dbReference type="HOGENOM" id="CLU_165205_0_0_1"/>
<dbReference type="InParanoid" id="Q2V485"/>
<dbReference type="OMA" id="IQQYDRC"/>
<dbReference type="PhylomeDB" id="Q2V485"/>
<dbReference type="PRO" id="PR:Q2V485"/>
<dbReference type="Proteomes" id="UP000006548">
    <property type="component" value="Chromosome 2"/>
</dbReference>
<dbReference type="GO" id="GO:0005576">
    <property type="term" value="C:extracellular region"/>
    <property type="evidence" value="ECO:0007669"/>
    <property type="project" value="UniProtKB-SubCell"/>
</dbReference>
<dbReference type="GO" id="GO:0050832">
    <property type="term" value="P:defense response to fungus"/>
    <property type="evidence" value="ECO:0007669"/>
    <property type="project" value="UniProtKB-KW"/>
</dbReference>
<dbReference type="GO" id="GO:0031640">
    <property type="term" value="P:killing of cells of another organism"/>
    <property type="evidence" value="ECO:0007669"/>
    <property type="project" value="UniProtKB-KW"/>
</dbReference>
<dbReference type="InterPro" id="IPR056373">
    <property type="entry name" value="Defensin-like_dom"/>
</dbReference>
<dbReference type="Pfam" id="PF24552">
    <property type="entry name" value="Defensin"/>
    <property type="match status" value="1"/>
</dbReference>
<evidence type="ECO:0000250" key="1"/>
<evidence type="ECO:0000255" key="2"/>
<evidence type="ECO:0000305" key="3"/>
<protein>
    <recommendedName>
        <fullName>Putative defensin-like protein 62</fullName>
    </recommendedName>
</protein>
<proteinExistence type="inferred from homology"/>
<reference key="1">
    <citation type="journal article" date="1999" name="Nature">
        <title>Sequence and analysis of chromosome 2 of the plant Arabidopsis thaliana.</title>
        <authorList>
            <person name="Lin X."/>
            <person name="Kaul S."/>
            <person name="Rounsley S.D."/>
            <person name="Shea T.P."/>
            <person name="Benito M.-I."/>
            <person name="Town C.D."/>
            <person name="Fujii C.Y."/>
            <person name="Mason T.M."/>
            <person name="Bowman C.L."/>
            <person name="Barnstead M.E."/>
            <person name="Feldblyum T.V."/>
            <person name="Buell C.R."/>
            <person name="Ketchum K.A."/>
            <person name="Lee J.J."/>
            <person name="Ronning C.M."/>
            <person name="Koo H.L."/>
            <person name="Moffat K.S."/>
            <person name="Cronin L.A."/>
            <person name="Shen M."/>
            <person name="Pai G."/>
            <person name="Van Aken S."/>
            <person name="Umayam L."/>
            <person name="Tallon L.J."/>
            <person name="Gill J.E."/>
            <person name="Adams M.D."/>
            <person name="Carrera A.J."/>
            <person name="Creasy T.H."/>
            <person name="Goodman H.M."/>
            <person name="Somerville C.R."/>
            <person name="Copenhaver G.P."/>
            <person name="Preuss D."/>
            <person name="Nierman W.C."/>
            <person name="White O."/>
            <person name="Eisen J.A."/>
            <person name="Salzberg S.L."/>
            <person name="Fraser C.M."/>
            <person name="Venter J.C."/>
        </authorList>
    </citation>
    <scope>NUCLEOTIDE SEQUENCE [LARGE SCALE GENOMIC DNA]</scope>
    <source>
        <strain>cv. Columbia</strain>
    </source>
</reference>
<reference key="2">
    <citation type="journal article" date="2017" name="Plant J.">
        <title>Araport11: a complete reannotation of the Arabidopsis thaliana reference genome.</title>
        <authorList>
            <person name="Cheng C.Y."/>
            <person name="Krishnakumar V."/>
            <person name="Chan A.P."/>
            <person name="Thibaud-Nissen F."/>
            <person name="Schobel S."/>
            <person name="Town C.D."/>
        </authorList>
    </citation>
    <scope>GENOME REANNOTATION</scope>
    <source>
        <strain>cv. Columbia</strain>
    </source>
</reference>
<reference key="3">
    <citation type="journal article" date="2005" name="Plant Physiol.">
        <title>Genome organization of more than 300 defensin-like genes in Arabidopsis.</title>
        <authorList>
            <person name="Silverstein K.A.T."/>
            <person name="Graham M.A."/>
            <person name="Paape T.D."/>
            <person name="VandenBosch K.A."/>
        </authorList>
    </citation>
    <scope>GENE FAMILY</scope>
</reference>
<organism>
    <name type="scientific">Arabidopsis thaliana</name>
    <name type="common">Mouse-ear cress</name>
    <dbReference type="NCBI Taxonomy" id="3702"/>
    <lineage>
        <taxon>Eukaryota</taxon>
        <taxon>Viridiplantae</taxon>
        <taxon>Streptophyta</taxon>
        <taxon>Embryophyta</taxon>
        <taxon>Tracheophyta</taxon>
        <taxon>Spermatophyta</taxon>
        <taxon>Magnoliopsida</taxon>
        <taxon>eudicotyledons</taxon>
        <taxon>Gunneridae</taxon>
        <taxon>Pentapetalae</taxon>
        <taxon>rosids</taxon>
        <taxon>malvids</taxon>
        <taxon>Brassicales</taxon>
        <taxon>Brassicaceae</taxon>
        <taxon>Camelineae</taxon>
        <taxon>Arabidopsis</taxon>
    </lineage>
</organism>
<feature type="signal peptide" evidence="2">
    <location>
        <begin position="1"/>
        <end position="26"/>
    </location>
</feature>
<feature type="chain" id="PRO_0000379641" description="Putative defensin-like protein 62">
    <location>
        <begin position="27"/>
        <end position="76"/>
    </location>
</feature>
<feature type="disulfide bond" evidence="1">
    <location>
        <begin position="30"/>
        <end position="71"/>
    </location>
</feature>
<feature type="disulfide bond" evidence="1">
    <location>
        <begin position="34"/>
        <end position="57"/>
    </location>
</feature>
<feature type="disulfide bond" evidence="1">
    <location>
        <begin position="43"/>
        <end position="69"/>
    </location>
</feature>
<feature type="disulfide bond" evidence="1">
    <location>
        <begin position="47"/>
        <end position="70"/>
    </location>
</feature>